<dbReference type="EC" id="4.1.3.39" evidence="1"/>
<dbReference type="EMBL" id="AP008957">
    <property type="protein sequence ID" value="BAH36466.1"/>
    <property type="molecule type" value="Genomic_DNA"/>
</dbReference>
<dbReference type="SMR" id="C0ZU50"/>
<dbReference type="KEGG" id="rer:RER_57580"/>
<dbReference type="eggNOG" id="COG0119">
    <property type="taxonomic scope" value="Bacteria"/>
</dbReference>
<dbReference type="HOGENOM" id="CLU_049173_0_0_11"/>
<dbReference type="Proteomes" id="UP000002204">
    <property type="component" value="Chromosome"/>
</dbReference>
<dbReference type="GO" id="GO:0003852">
    <property type="term" value="F:2-isopropylmalate synthase activity"/>
    <property type="evidence" value="ECO:0007669"/>
    <property type="project" value="TreeGrafter"/>
</dbReference>
<dbReference type="GO" id="GO:0008701">
    <property type="term" value="F:4-hydroxy-2-oxovalerate aldolase activity"/>
    <property type="evidence" value="ECO:0007669"/>
    <property type="project" value="UniProtKB-UniRule"/>
</dbReference>
<dbReference type="GO" id="GO:0030145">
    <property type="term" value="F:manganese ion binding"/>
    <property type="evidence" value="ECO:0007669"/>
    <property type="project" value="UniProtKB-UniRule"/>
</dbReference>
<dbReference type="GO" id="GO:0009056">
    <property type="term" value="P:catabolic process"/>
    <property type="evidence" value="ECO:0007669"/>
    <property type="project" value="UniProtKB-KW"/>
</dbReference>
<dbReference type="GO" id="GO:0009098">
    <property type="term" value="P:L-leucine biosynthetic process"/>
    <property type="evidence" value="ECO:0007669"/>
    <property type="project" value="TreeGrafter"/>
</dbReference>
<dbReference type="CDD" id="cd07943">
    <property type="entry name" value="DRE_TIM_HOA"/>
    <property type="match status" value="1"/>
</dbReference>
<dbReference type="Gene3D" id="1.10.8.60">
    <property type="match status" value="1"/>
</dbReference>
<dbReference type="Gene3D" id="3.20.20.70">
    <property type="entry name" value="Aldolase class I"/>
    <property type="match status" value="1"/>
</dbReference>
<dbReference type="HAMAP" id="MF_01656">
    <property type="entry name" value="HOA"/>
    <property type="match status" value="1"/>
</dbReference>
<dbReference type="InterPro" id="IPR050073">
    <property type="entry name" value="2-IPM_HCS-like"/>
</dbReference>
<dbReference type="InterPro" id="IPR017629">
    <property type="entry name" value="4OH_2_O-val_aldolase"/>
</dbReference>
<dbReference type="InterPro" id="IPR013785">
    <property type="entry name" value="Aldolase_TIM"/>
</dbReference>
<dbReference type="InterPro" id="IPR012425">
    <property type="entry name" value="DmpG_comm"/>
</dbReference>
<dbReference type="InterPro" id="IPR035685">
    <property type="entry name" value="DRE_TIM_HOA"/>
</dbReference>
<dbReference type="InterPro" id="IPR000891">
    <property type="entry name" value="PYR_CT"/>
</dbReference>
<dbReference type="NCBIfam" id="TIGR03217">
    <property type="entry name" value="4OH_2_O_val_ald"/>
    <property type="match status" value="1"/>
</dbReference>
<dbReference type="NCBIfam" id="NF006049">
    <property type="entry name" value="PRK08195.1"/>
    <property type="match status" value="1"/>
</dbReference>
<dbReference type="PANTHER" id="PTHR10277:SF9">
    <property type="entry name" value="2-ISOPROPYLMALATE SYNTHASE 1, CHLOROPLASTIC-RELATED"/>
    <property type="match status" value="1"/>
</dbReference>
<dbReference type="PANTHER" id="PTHR10277">
    <property type="entry name" value="HOMOCITRATE SYNTHASE-RELATED"/>
    <property type="match status" value="1"/>
</dbReference>
<dbReference type="Pfam" id="PF07836">
    <property type="entry name" value="DmpG_comm"/>
    <property type="match status" value="1"/>
</dbReference>
<dbReference type="Pfam" id="PF00682">
    <property type="entry name" value="HMGL-like"/>
    <property type="match status" value="1"/>
</dbReference>
<dbReference type="SUPFAM" id="SSF51569">
    <property type="entry name" value="Aldolase"/>
    <property type="match status" value="1"/>
</dbReference>
<dbReference type="SUPFAM" id="SSF89000">
    <property type="entry name" value="post-HMGL domain-like"/>
    <property type="match status" value="1"/>
</dbReference>
<dbReference type="PROSITE" id="PS50991">
    <property type="entry name" value="PYR_CT"/>
    <property type="match status" value="1"/>
</dbReference>
<feature type="chain" id="PRO_0000387894" description="4-hydroxy-2-oxovalerate aldolase 2">
    <location>
        <begin position="1"/>
        <end position="342"/>
    </location>
</feature>
<feature type="domain" description="Pyruvate carboxyltransferase" evidence="1">
    <location>
        <begin position="6"/>
        <end position="258"/>
    </location>
</feature>
<feature type="active site" description="Proton acceptor" evidence="1">
    <location>
        <position position="18"/>
    </location>
</feature>
<feature type="binding site" evidence="1">
    <location>
        <begin position="14"/>
        <end position="15"/>
    </location>
    <ligand>
        <name>substrate</name>
    </ligand>
</feature>
<feature type="binding site" evidence="1">
    <location>
        <position position="15"/>
    </location>
    <ligand>
        <name>Mn(2+)</name>
        <dbReference type="ChEBI" id="CHEBI:29035"/>
    </ligand>
</feature>
<feature type="binding site" evidence="1">
    <location>
        <position position="168"/>
    </location>
    <ligand>
        <name>substrate</name>
    </ligand>
</feature>
<feature type="binding site" evidence="1">
    <location>
        <position position="197"/>
    </location>
    <ligand>
        <name>Mn(2+)</name>
        <dbReference type="ChEBI" id="CHEBI:29035"/>
    </ligand>
</feature>
<feature type="binding site" evidence="1">
    <location>
        <position position="197"/>
    </location>
    <ligand>
        <name>substrate</name>
    </ligand>
</feature>
<feature type="binding site" evidence="1">
    <location>
        <position position="199"/>
    </location>
    <ligand>
        <name>Mn(2+)</name>
        <dbReference type="ChEBI" id="CHEBI:29035"/>
    </ligand>
</feature>
<feature type="binding site" evidence="1">
    <location>
        <position position="288"/>
    </location>
    <ligand>
        <name>substrate</name>
    </ligand>
</feature>
<feature type="site" description="Transition state stabilizer" evidence="1">
    <location>
        <position position="14"/>
    </location>
</feature>
<sequence>MSNRKIFVQDVTLRDGMHAVRHRISPTDVKRIVTALDAAGVDAIEVAHGDGLAGGSLNYGPGSNTDWEWIEAAAEVLEHARLTTLLLPGVGTISELKHAYDLGVRSVRVATHCTEADVSAQHIETAREIGMDVSGFLMMSHMAPAEELAKQAKLMESYGAHCVYVTDSGGRLVMNDVADRVRAYRDILDEGTEIGIHAHENLSLSVANSVVAVQNGVTRVDASLAGHGAGAGNCPLEAFIAVANIEEWEHGCDLFALQDAADDIVRPLQDRPVRVDRETLTLGYAGVYSSFLRHAEAASERYGIDVRTLLLEAGRRRLVGGQEDMIVDIALTLAAQATKEAV</sequence>
<name>HOA2_RHOE4</name>
<protein>
    <recommendedName>
        <fullName evidence="1">4-hydroxy-2-oxovalerate aldolase 2</fullName>
        <shortName evidence="1">HOA 2</shortName>
        <ecNumber evidence="1">4.1.3.39</ecNumber>
    </recommendedName>
    <alternativeName>
        <fullName evidence="1">4-hydroxy-2-keto-pentanoic acid aldolase 2</fullName>
    </alternativeName>
    <alternativeName>
        <fullName evidence="1">4-hydroxy-2-oxopentanoate aldolase 2</fullName>
    </alternativeName>
</protein>
<evidence type="ECO:0000255" key="1">
    <source>
        <dbReference type="HAMAP-Rule" id="MF_01656"/>
    </source>
</evidence>
<accession>C0ZU50</accession>
<comment type="catalytic activity">
    <reaction evidence="1">
        <text>(S)-4-hydroxy-2-oxopentanoate = acetaldehyde + pyruvate</text>
        <dbReference type="Rhea" id="RHEA:22624"/>
        <dbReference type="ChEBI" id="CHEBI:15343"/>
        <dbReference type="ChEBI" id="CHEBI:15361"/>
        <dbReference type="ChEBI" id="CHEBI:73143"/>
        <dbReference type="EC" id="4.1.3.39"/>
    </reaction>
</comment>
<comment type="similarity">
    <text evidence="1">Belongs to the 4-hydroxy-2-oxovalerate aldolase family.</text>
</comment>
<gene>
    <name type="ordered locus">RER_57580</name>
</gene>
<proteinExistence type="inferred from homology"/>
<keyword id="KW-0058">Aromatic hydrocarbons catabolism</keyword>
<keyword id="KW-0456">Lyase</keyword>
<keyword id="KW-0464">Manganese</keyword>
<keyword id="KW-0479">Metal-binding</keyword>
<organism>
    <name type="scientific">Rhodococcus erythropolis (strain PR4 / NBRC 100887)</name>
    <dbReference type="NCBI Taxonomy" id="234621"/>
    <lineage>
        <taxon>Bacteria</taxon>
        <taxon>Bacillati</taxon>
        <taxon>Actinomycetota</taxon>
        <taxon>Actinomycetes</taxon>
        <taxon>Mycobacteriales</taxon>
        <taxon>Nocardiaceae</taxon>
        <taxon>Rhodococcus</taxon>
        <taxon>Rhodococcus erythropolis group</taxon>
    </lineage>
</organism>
<reference key="1">
    <citation type="submission" date="2005-03" db="EMBL/GenBank/DDBJ databases">
        <title>Comparison of the complete genome sequences of Rhodococcus erythropolis PR4 and Rhodococcus opacus B4.</title>
        <authorList>
            <person name="Takarada H."/>
            <person name="Sekine M."/>
            <person name="Hosoyama A."/>
            <person name="Yamada R."/>
            <person name="Fujisawa T."/>
            <person name="Omata S."/>
            <person name="Shimizu A."/>
            <person name="Tsukatani N."/>
            <person name="Tanikawa S."/>
            <person name="Fujita N."/>
            <person name="Harayama S."/>
        </authorList>
    </citation>
    <scope>NUCLEOTIDE SEQUENCE [LARGE SCALE GENOMIC DNA]</scope>
    <source>
        <strain>PR4 / NBRC 100887</strain>
    </source>
</reference>